<feature type="chain" id="PRO_1000016495" description="Protein NrdI">
    <location>
        <begin position="1"/>
        <end position="135"/>
    </location>
</feature>
<organism>
    <name type="scientific">Brucella ovis (strain ATCC 25840 / 63/290 / NCTC 10512)</name>
    <dbReference type="NCBI Taxonomy" id="444178"/>
    <lineage>
        <taxon>Bacteria</taxon>
        <taxon>Pseudomonadati</taxon>
        <taxon>Pseudomonadota</taxon>
        <taxon>Alphaproteobacteria</taxon>
        <taxon>Hyphomicrobiales</taxon>
        <taxon>Brucellaceae</taxon>
        <taxon>Brucella/Ochrobactrum group</taxon>
        <taxon>Brucella</taxon>
    </lineage>
</organism>
<reference key="1">
    <citation type="journal article" date="2009" name="PLoS ONE">
        <title>Genome degradation in Brucella ovis corresponds with narrowing of its host range and tissue tropism.</title>
        <authorList>
            <person name="Tsolis R.M."/>
            <person name="Seshadri R."/>
            <person name="Santos R.L."/>
            <person name="Sangari F.J."/>
            <person name="Lobo J.M."/>
            <person name="de Jong M.F."/>
            <person name="Ren Q."/>
            <person name="Myers G."/>
            <person name="Brinkac L.M."/>
            <person name="Nelson W.C."/>
            <person name="Deboy R.T."/>
            <person name="Angiuoli S."/>
            <person name="Khouri H."/>
            <person name="Dimitrov G."/>
            <person name="Robinson J.R."/>
            <person name="Mulligan S."/>
            <person name="Walker R.L."/>
            <person name="Elzer P.E."/>
            <person name="Hassan K.A."/>
            <person name="Paulsen I.T."/>
        </authorList>
    </citation>
    <scope>NUCLEOTIDE SEQUENCE [LARGE SCALE GENOMIC DNA]</scope>
    <source>
        <strain>ATCC 25840 / 63/290 / NCTC 10512</strain>
    </source>
</reference>
<evidence type="ECO:0000255" key="1">
    <source>
        <dbReference type="HAMAP-Rule" id="MF_00128"/>
    </source>
</evidence>
<name>NRDI_BRUO2</name>
<proteinExistence type="inferred from homology"/>
<dbReference type="EMBL" id="CP000709">
    <property type="protein sequence ID" value="ABQ62891.1"/>
    <property type="molecule type" value="Genomic_DNA"/>
</dbReference>
<dbReference type="RefSeq" id="WP_002966273.1">
    <property type="nucleotide sequence ID" value="NC_009504.1"/>
</dbReference>
<dbReference type="SMR" id="A5VU41"/>
<dbReference type="GeneID" id="97535519"/>
<dbReference type="KEGG" id="bov:BOV_A0291"/>
<dbReference type="HOGENOM" id="CLU_114845_0_0_5"/>
<dbReference type="PhylomeDB" id="A5VU41"/>
<dbReference type="Proteomes" id="UP000006383">
    <property type="component" value="Chromosome II"/>
</dbReference>
<dbReference type="GO" id="GO:0010181">
    <property type="term" value="F:FMN binding"/>
    <property type="evidence" value="ECO:0007669"/>
    <property type="project" value="InterPro"/>
</dbReference>
<dbReference type="GO" id="GO:0036211">
    <property type="term" value="P:protein modification process"/>
    <property type="evidence" value="ECO:0007669"/>
    <property type="project" value="InterPro"/>
</dbReference>
<dbReference type="Gene3D" id="3.40.50.360">
    <property type="match status" value="1"/>
</dbReference>
<dbReference type="HAMAP" id="MF_00128">
    <property type="entry name" value="NrdI"/>
    <property type="match status" value="1"/>
</dbReference>
<dbReference type="InterPro" id="IPR029039">
    <property type="entry name" value="Flavoprotein-like_sf"/>
</dbReference>
<dbReference type="InterPro" id="IPR020852">
    <property type="entry name" value="RNR_Ib_NrdI_bac"/>
</dbReference>
<dbReference type="InterPro" id="IPR004465">
    <property type="entry name" value="RNR_NrdI"/>
</dbReference>
<dbReference type="NCBIfam" id="TIGR00333">
    <property type="entry name" value="nrdI"/>
    <property type="match status" value="1"/>
</dbReference>
<dbReference type="PANTHER" id="PTHR37297">
    <property type="entry name" value="PROTEIN NRDI"/>
    <property type="match status" value="1"/>
</dbReference>
<dbReference type="PANTHER" id="PTHR37297:SF1">
    <property type="entry name" value="PROTEIN NRDI"/>
    <property type="match status" value="1"/>
</dbReference>
<dbReference type="Pfam" id="PF07972">
    <property type="entry name" value="Flavodoxin_NdrI"/>
    <property type="match status" value="1"/>
</dbReference>
<dbReference type="PIRSF" id="PIRSF005087">
    <property type="entry name" value="NrdI"/>
    <property type="match status" value="1"/>
</dbReference>
<dbReference type="SUPFAM" id="SSF52218">
    <property type="entry name" value="Flavoproteins"/>
    <property type="match status" value="1"/>
</dbReference>
<gene>
    <name evidence="1" type="primary">nrdI</name>
    <name type="ordered locus">BOV_A0291</name>
</gene>
<protein>
    <recommendedName>
        <fullName evidence="1">Protein NrdI</fullName>
    </recommendedName>
</protein>
<sequence>MSLIVYFSSRSGNTHRFVERLGVRSSRIPLEASGALQVREPFVLVTPTYGGGSTKGAVPNPVIRFLNDADNRALIRGVIAAGNSNFGEAFCIAGNIISAKCGVPYLYRFELLGTAEDVGNVRNGMEQFWTRQTQA</sequence>
<accession>A5VU41</accession>
<comment type="function">
    <text evidence="1">Probably involved in ribonucleotide reductase function.</text>
</comment>
<comment type="similarity">
    <text evidence="1">Belongs to the NrdI family.</text>
</comment>